<feature type="chain" id="PRO_0000315318" description="Heat shock protein HspQ">
    <location>
        <begin position="1"/>
        <end position="105"/>
    </location>
</feature>
<feature type="region of interest" description="Disordered" evidence="2">
    <location>
        <begin position="84"/>
        <end position="105"/>
    </location>
</feature>
<feature type="compositionally biased region" description="Basic residues" evidence="2">
    <location>
        <begin position="96"/>
        <end position="105"/>
    </location>
</feature>
<protein>
    <recommendedName>
        <fullName evidence="1">Heat shock protein HspQ</fullName>
    </recommendedName>
</protein>
<keyword id="KW-0963">Cytoplasm</keyword>
<keyword id="KW-1185">Reference proteome</keyword>
<keyword id="KW-0346">Stress response</keyword>
<accession>Q8D251</accession>
<comment type="function">
    <text evidence="1">Involved in the degradation of certain denaturated proteins, including DnaA, during heat shock stress.</text>
</comment>
<comment type="subcellular location">
    <subcellularLocation>
        <location evidence="1">Cytoplasm</location>
    </subcellularLocation>
</comment>
<comment type="similarity">
    <text evidence="1">Belongs to the HspQ family.</text>
</comment>
<comment type="sequence caution" evidence="3">
    <conflict type="erroneous initiation">
        <sequence resource="EMBL-CDS" id="BAC24649"/>
    </conflict>
</comment>
<evidence type="ECO:0000255" key="1">
    <source>
        <dbReference type="HAMAP-Rule" id="MF_01194"/>
    </source>
</evidence>
<evidence type="ECO:0000256" key="2">
    <source>
        <dbReference type="SAM" id="MobiDB-lite"/>
    </source>
</evidence>
<evidence type="ECO:0000305" key="3"/>
<dbReference type="EMBL" id="BA000021">
    <property type="protein sequence ID" value="BAC24649.1"/>
    <property type="status" value="ALT_INIT"/>
    <property type="molecule type" value="Genomic_DNA"/>
</dbReference>
<dbReference type="SMR" id="Q8D251"/>
<dbReference type="STRING" id="36870.gene:10369007"/>
<dbReference type="KEGG" id="wbr:yccV"/>
<dbReference type="eggNOG" id="COG3785">
    <property type="taxonomic scope" value="Bacteria"/>
</dbReference>
<dbReference type="HOGENOM" id="CLU_123865_1_0_6"/>
<dbReference type="OrthoDB" id="9806050at2"/>
<dbReference type="Proteomes" id="UP000000562">
    <property type="component" value="Chromosome"/>
</dbReference>
<dbReference type="GO" id="GO:0005737">
    <property type="term" value="C:cytoplasm"/>
    <property type="evidence" value="ECO:0007669"/>
    <property type="project" value="UniProtKB-SubCell"/>
</dbReference>
<dbReference type="GO" id="GO:0003677">
    <property type="term" value="F:DNA binding"/>
    <property type="evidence" value="ECO:0007669"/>
    <property type="project" value="InterPro"/>
</dbReference>
<dbReference type="GO" id="GO:0009408">
    <property type="term" value="P:response to heat"/>
    <property type="evidence" value="ECO:0007669"/>
    <property type="project" value="UniProtKB-UniRule"/>
</dbReference>
<dbReference type="Gene3D" id="2.30.30.390">
    <property type="entry name" value="Hemimethylated DNA-binding domain"/>
    <property type="match status" value="1"/>
</dbReference>
<dbReference type="HAMAP" id="MF_01194">
    <property type="entry name" value="HspQ"/>
    <property type="match status" value="1"/>
</dbReference>
<dbReference type="InterPro" id="IPR011722">
    <property type="entry name" value="Hemimethylated_DNA-bd_dom"/>
</dbReference>
<dbReference type="InterPro" id="IPR036623">
    <property type="entry name" value="Hemimethylated_DNA-bd_sf"/>
</dbReference>
<dbReference type="InterPro" id="IPR022866">
    <property type="entry name" value="HspQ"/>
</dbReference>
<dbReference type="NCBIfam" id="NF010729">
    <property type="entry name" value="PRK14129.1"/>
    <property type="match status" value="1"/>
</dbReference>
<dbReference type="NCBIfam" id="TIGR02097">
    <property type="entry name" value="yccV"/>
    <property type="match status" value="1"/>
</dbReference>
<dbReference type="Pfam" id="PF08755">
    <property type="entry name" value="YccV-like"/>
    <property type="match status" value="1"/>
</dbReference>
<dbReference type="SMART" id="SM00992">
    <property type="entry name" value="YccV-like"/>
    <property type="match status" value="1"/>
</dbReference>
<dbReference type="SUPFAM" id="SSF141255">
    <property type="entry name" value="YccV-like"/>
    <property type="match status" value="1"/>
</dbReference>
<gene>
    <name evidence="1" type="primary">hspQ</name>
    <name type="ordered locus">WIGBR5030</name>
</gene>
<reference key="1">
    <citation type="journal article" date="2002" name="Nat. Genet.">
        <title>Genome sequence of the endocellular obligate symbiont of tsetse flies, Wigglesworthia glossinidia.</title>
        <authorList>
            <person name="Akman L."/>
            <person name="Yamashita A."/>
            <person name="Watanabe H."/>
            <person name="Oshima K."/>
            <person name="Shiba T."/>
            <person name="Hattori M."/>
            <person name="Aksoy S."/>
        </authorList>
    </citation>
    <scope>NUCLEOTIDE SEQUENCE [LARGE SCALE GENOMIC DNA]</scope>
</reference>
<organism>
    <name type="scientific">Wigglesworthia glossinidia brevipalpis</name>
    <dbReference type="NCBI Taxonomy" id="36870"/>
    <lineage>
        <taxon>Bacteria</taxon>
        <taxon>Pseudomonadati</taxon>
        <taxon>Pseudomonadota</taxon>
        <taxon>Gammaproteobacteria</taxon>
        <taxon>Enterobacterales</taxon>
        <taxon>Erwiniaceae</taxon>
        <taxon>Wigglesworthia</taxon>
    </lineage>
</organism>
<name>HSPQ_WIGBR</name>
<sequence>MISSKFGIGQQVRHKLLGYLGVIIDVDPEYSLEKPSLEEISADDSLRRSPWYYVVMEDEDGKPVHTYLAEAQLGYEISPVHPEQPKLDELSASIKKQLKTPRLRN</sequence>
<proteinExistence type="inferred from homology"/>